<name>XERD_BRUME</name>
<evidence type="ECO:0000255" key="1">
    <source>
        <dbReference type="HAMAP-Rule" id="MF_01807"/>
    </source>
</evidence>
<evidence type="ECO:0000255" key="2">
    <source>
        <dbReference type="PROSITE-ProRule" id="PRU01246"/>
    </source>
</evidence>
<evidence type="ECO:0000255" key="3">
    <source>
        <dbReference type="PROSITE-ProRule" id="PRU01248"/>
    </source>
</evidence>
<protein>
    <recommendedName>
        <fullName evidence="1">Tyrosine recombinase XerD</fullName>
    </recommendedName>
</protein>
<gene>
    <name evidence="1" type="primary">xerD</name>
    <name type="ordered locus">BMEI0040</name>
</gene>
<keyword id="KW-0131">Cell cycle</keyword>
<keyword id="KW-0132">Cell division</keyword>
<keyword id="KW-0159">Chromosome partition</keyword>
<keyword id="KW-0963">Cytoplasm</keyword>
<keyword id="KW-0229">DNA integration</keyword>
<keyword id="KW-0233">DNA recombination</keyword>
<keyword id="KW-0238">DNA-binding</keyword>
<sequence>MTMRASLAIENFLEMMSAERGAAQNTLESYRRDLEAAAEELAAKGVNLAEAETGHIRMTLDTMAAQGFAPTSQARRLSALRQFFRFLYSEGFRQDDPTGILYAPKKQKPLPKIMSVENVGKLLDRAALEANEAAEPGERIKALRLHALLETLYATGLRVSELVGLPVTVARTDHRFLLVRGKGSKDRMVPLSRKARDALQKFLTLRDSLPGSDDNPWLFPAFSESGHLARQVFARELKGLAARAGLAASSVSPHVLRHAFASHLLQNGADLRTVQQLLGHADISTTQIYTHVLEERLHKLVSEHHPLAD</sequence>
<feature type="chain" id="PRO_0000095376" description="Tyrosine recombinase XerD">
    <location>
        <begin position="1"/>
        <end position="309"/>
    </location>
</feature>
<feature type="domain" description="Core-binding (CB)" evidence="3">
    <location>
        <begin position="3"/>
        <end position="88"/>
    </location>
</feature>
<feature type="domain" description="Tyr recombinase" evidence="2">
    <location>
        <begin position="109"/>
        <end position="302"/>
    </location>
</feature>
<feature type="active site" evidence="1">
    <location>
        <position position="158"/>
    </location>
</feature>
<feature type="active site" evidence="1">
    <location>
        <position position="182"/>
    </location>
</feature>
<feature type="active site" evidence="1">
    <location>
        <position position="254"/>
    </location>
</feature>
<feature type="active site" evidence="1">
    <location>
        <position position="257"/>
    </location>
</feature>
<feature type="active site" evidence="1">
    <location>
        <position position="280"/>
    </location>
</feature>
<feature type="active site" description="O-(3'-phospho-DNA)-tyrosine intermediate" evidence="1">
    <location>
        <position position="289"/>
    </location>
</feature>
<dbReference type="EMBL" id="AE008917">
    <property type="protein sequence ID" value="AAL51222.1"/>
    <property type="molecule type" value="Genomic_DNA"/>
</dbReference>
<dbReference type="PIR" id="AC3257">
    <property type="entry name" value="AC3257"/>
</dbReference>
<dbReference type="SMR" id="Q8YJP2"/>
<dbReference type="KEGG" id="bme:BMEI0040"/>
<dbReference type="eggNOG" id="COG4974">
    <property type="taxonomic scope" value="Bacteria"/>
</dbReference>
<dbReference type="Proteomes" id="UP000000419">
    <property type="component" value="Chromosome I"/>
</dbReference>
<dbReference type="GO" id="GO:0005737">
    <property type="term" value="C:cytoplasm"/>
    <property type="evidence" value="ECO:0007669"/>
    <property type="project" value="UniProtKB-SubCell"/>
</dbReference>
<dbReference type="GO" id="GO:0003677">
    <property type="term" value="F:DNA binding"/>
    <property type="evidence" value="ECO:0007669"/>
    <property type="project" value="UniProtKB-KW"/>
</dbReference>
<dbReference type="GO" id="GO:0009037">
    <property type="term" value="F:tyrosine-based site-specific recombinase activity"/>
    <property type="evidence" value="ECO:0007669"/>
    <property type="project" value="UniProtKB-UniRule"/>
</dbReference>
<dbReference type="GO" id="GO:0051301">
    <property type="term" value="P:cell division"/>
    <property type="evidence" value="ECO:0007669"/>
    <property type="project" value="UniProtKB-KW"/>
</dbReference>
<dbReference type="GO" id="GO:0007059">
    <property type="term" value="P:chromosome segregation"/>
    <property type="evidence" value="ECO:0007669"/>
    <property type="project" value="UniProtKB-UniRule"/>
</dbReference>
<dbReference type="GO" id="GO:0006313">
    <property type="term" value="P:DNA transposition"/>
    <property type="evidence" value="ECO:0007669"/>
    <property type="project" value="UniProtKB-UniRule"/>
</dbReference>
<dbReference type="Gene3D" id="1.10.150.130">
    <property type="match status" value="1"/>
</dbReference>
<dbReference type="Gene3D" id="1.10.443.10">
    <property type="entry name" value="Intergrase catalytic core"/>
    <property type="match status" value="1"/>
</dbReference>
<dbReference type="HAMAP" id="MF_01808">
    <property type="entry name" value="Recomb_XerC_XerD"/>
    <property type="match status" value="1"/>
</dbReference>
<dbReference type="HAMAP" id="MF_01807">
    <property type="entry name" value="Recomb_XerD"/>
    <property type="match status" value="1"/>
</dbReference>
<dbReference type="InterPro" id="IPR044068">
    <property type="entry name" value="CB"/>
</dbReference>
<dbReference type="InterPro" id="IPR011010">
    <property type="entry name" value="DNA_brk_join_enz"/>
</dbReference>
<dbReference type="InterPro" id="IPR013762">
    <property type="entry name" value="Integrase-like_cat_sf"/>
</dbReference>
<dbReference type="InterPro" id="IPR002104">
    <property type="entry name" value="Integrase_catalytic"/>
</dbReference>
<dbReference type="InterPro" id="IPR010998">
    <property type="entry name" value="Integrase_recombinase_N"/>
</dbReference>
<dbReference type="InterPro" id="IPR004107">
    <property type="entry name" value="Integrase_SAM-like_N"/>
</dbReference>
<dbReference type="InterPro" id="IPR011932">
    <property type="entry name" value="Recomb_XerD"/>
</dbReference>
<dbReference type="InterPro" id="IPR023009">
    <property type="entry name" value="Tyrosine_recombinase_XerC/XerD"/>
</dbReference>
<dbReference type="InterPro" id="IPR050090">
    <property type="entry name" value="Tyrosine_recombinase_XerCD"/>
</dbReference>
<dbReference type="NCBIfam" id="NF001399">
    <property type="entry name" value="PRK00283.1"/>
    <property type="match status" value="1"/>
</dbReference>
<dbReference type="NCBIfam" id="TIGR02225">
    <property type="entry name" value="recomb_XerD"/>
    <property type="match status" value="1"/>
</dbReference>
<dbReference type="PANTHER" id="PTHR30349">
    <property type="entry name" value="PHAGE INTEGRASE-RELATED"/>
    <property type="match status" value="1"/>
</dbReference>
<dbReference type="PANTHER" id="PTHR30349:SF90">
    <property type="entry name" value="TYROSINE RECOMBINASE XERD"/>
    <property type="match status" value="1"/>
</dbReference>
<dbReference type="Pfam" id="PF02899">
    <property type="entry name" value="Phage_int_SAM_1"/>
    <property type="match status" value="1"/>
</dbReference>
<dbReference type="Pfam" id="PF00589">
    <property type="entry name" value="Phage_integrase"/>
    <property type="match status" value="1"/>
</dbReference>
<dbReference type="SUPFAM" id="SSF56349">
    <property type="entry name" value="DNA breaking-rejoining enzymes"/>
    <property type="match status" value="1"/>
</dbReference>
<dbReference type="PROSITE" id="PS51900">
    <property type="entry name" value="CB"/>
    <property type="match status" value="1"/>
</dbReference>
<dbReference type="PROSITE" id="PS51898">
    <property type="entry name" value="TYR_RECOMBINASE"/>
    <property type="match status" value="1"/>
</dbReference>
<reference key="1">
    <citation type="journal article" date="2002" name="Proc. Natl. Acad. Sci. U.S.A.">
        <title>The genome sequence of the facultative intracellular pathogen Brucella melitensis.</title>
        <authorList>
            <person name="DelVecchio V.G."/>
            <person name="Kapatral V."/>
            <person name="Redkar R.J."/>
            <person name="Patra G."/>
            <person name="Mujer C."/>
            <person name="Los T."/>
            <person name="Ivanova N."/>
            <person name="Anderson I."/>
            <person name="Bhattacharyya A."/>
            <person name="Lykidis A."/>
            <person name="Reznik G."/>
            <person name="Jablonski L."/>
            <person name="Larsen N."/>
            <person name="D'Souza M."/>
            <person name="Bernal A."/>
            <person name="Mazur M."/>
            <person name="Goltsman E."/>
            <person name="Selkov E."/>
            <person name="Elzer P.H."/>
            <person name="Hagius S."/>
            <person name="O'Callaghan D."/>
            <person name="Letesson J.-J."/>
            <person name="Haselkorn R."/>
            <person name="Kyrpides N.C."/>
            <person name="Overbeek R."/>
        </authorList>
    </citation>
    <scope>NUCLEOTIDE SEQUENCE [LARGE SCALE GENOMIC DNA]</scope>
    <source>
        <strain>ATCC 23456 / CCUG 17765 / NCTC 10094 / 16M</strain>
    </source>
</reference>
<accession>Q8YJP2</accession>
<comment type="function">
    <text evidence="1">Site-specific tyrosine recombinase, which acts by catalyzing the cutting and rejoining of the recombining DNA molecules. The XerC-XerD complex is essential to convert dimers of the bacterial chromosome into monomers to permit their segregation at cell division. It also contributes to the segregational stability of plasmids.</text>
</comment>
<comment type="subunit">
    <text evidence="1">Forms a cyclic heterotetrameric complex composed of two molecules of XerC and two molecules of XerD.</text>
</comment>
<comment type="subcellular location">
    <subcellularLocation>
        <location evidence="1">Cytoplasm</location>
    </subcellularLocation>
</comment>
<comment type="similarity">
    <text evidence="1">Belongs to the 'phage' integrase family. XerD subfamily.</text>
</comment>
<proteinExistence type="inferred from homology"/>
<organism>
    <name type="scientific">Brucella melitensis biotype 1 (strain ATCC 23456 / CCUG 17765 / NCTC 10094 / 16M)</name>
    <dbReference type="NCBI Taxonomy" id="224914"/>
    <lineage>
        <taxon>Bacteria</taxon>
        <taxon>Pseudomonadati</taxon>
        <taxon>Pseudomonadota</taxon>
        <taxon>Alphaproteobacteria</taxon>
        <taxon>Hyphomicrobiales</taxon>
        <taxon>Brucellaceae</taxon>
        <taxon>Brucella/Ochrobactrum group</taxon>
        <taxon>Brucella</taxon>
    </lineage>
</organism>